<dbReference type="EMBL" id="CP000487">
    <property type="protein sequence ID" value="ABK82857.1"/>
    <property type="molecule type" value="Genomic_DNA"/>
</dbReference>
<dbReference type="RefSeq" id="WP_002850554.1">
    <property type="nucleotide sequence ID" value="NC_008599.1"/>
</dbReference>
<dbReference type="SMR" id="A0RR38"/>
<dbReference type="GeneID" id="61065354"/>
<dbReference type="KEGG" id="cff:CFF8240_1537"/>
<dbReference type="eggNOG" id="COG0211">
    <property type="taxonomic scope" value="Bacteria"/>
</dbReference>
<dbReference type="HOGENOM" id="CLU_095424_4_0_7"/>
<dbReference type="Proteomes" id="UP000000760">
    <property type="component" value="Chromosome"/>
</dbReference>
<dbReference type="GO" id="GO:0022625">
    <property type="term" value="C:cytosolic large ribosomal subunit"/>
    <property type="evidence" value="ECO:0007669"/>
    <property type="project" value="TreeGrafter"/>
</dbReference>
<dbReference type="GO" id="GO:0003735">
    <property type="term" value="F:structural constituent of ribosome"/>
    <property type="evidence" value="ECO:0007669"/>
    <property type="project" value="InterPro"/>
</dbReference>
<dbReference type="GO" id="GO:0006412">
    <property type="term" value="P:translation"/>
    <property type="evidence" value="ECO:0007669"/>
    <property type="project" value="UniProtKB-UniRule"/>
</dbReference>
<dbReference type="FunFam" id="2.40.50.100:FF:000004">
    <property type="entry name" value="50S ribosomal protein L27"/>
    <property type="match status" value="1"/>
</dbReference>
<dbReference type="Gene3D" id="2.40.50.100">
    <property type="match status" value="1"/>
</dbReference>
<dbReference type="HAMAP" id="MF_00539">
    <property type="entry name" value="Ribosomal_bL27"/>
    <property type="match status" value="1"/>
</dbReference>
<dbReference type="InterPro" id="IPR001684">
    <property type="entry name" value="Ribosomal_bL27"/>
</dbReference>
<dbReference type="InterPro" id="IPR018261">
    <property type="entry name" value="Ribosomal_bL27_CS"/>
</dbReference>
<dbReference type="NCBIfam" id="TIGR00062">
    <property type="entry name" value="L27"/>
    <property type="match status" value="1"/>
</dbReference>
<dbReference type="PANTHER" id="PTHR15893:SF0">
    <property type="entry name" value="LARGE RIBOSOMAL SUBUNIT PROTEIN BL27M"/>
    <property type="match status" value="1"/>
</dbReference>
<dbReference type="PANTHER" id="PTHR15893">
    <property type="entry name" value="RIBOSOMAL PROTEIN L27"/>
    <property type="match status" value="1"/>
</dbReference>
<dbReference type="Pfam" id="PF01016">
    <property type="entry name" value="Ribosomal_L27"/>
    <property type="match status" value="1"/>
</dbReference>
<dbReference type="PRINTS" id="PR00063">
    <property type="entry name" value="RIBOSOMALL27"/>
</dbReference>
<dbReference type="SUPFAM" id="SSF110324">
    <property type="entry name" value="Ribosomal L27 protein-like"/>
    <property type="match status" value="1"/>
</dbReference>
<dbReference type="PROSITE" id="PS00831">
    <property type="entry name" value="RIBOSOMAL_L27"/>
    <property type="match status" value="1"/>
</dbReference>
<gene>
    <name evidence="1" type="primary">rpmA</name>
    <name type="ordered locus">CFF8240_1537</name>
</gene>
<protein>
    <recommendedName>
        <fullName evidence="1">Large ribosomal subunit protein bL27</fullName>
    </recommendedName>
    <alternativeName>
        <fullName evidence="2">50S ribosomal protein L27</fullName>
    </alternativeName>
</protein>
<organism>
    <name type="scientific">Campylobacter fetus subsp. fetus (strain 82-40)</name>
    <dbReference type="NCBI Taxonomy" id="360106"/>
    <lineage>
        <taxon>Bacteria</taxon>
        <taxon>Pseudomonadati</taxon>
        <taxon>Campylobacterota</taxon>
        <taxon>Epsilonproteobacteria</taxon>
        <taxon>Campylobacterales</taxon>
        <taxon>Campylobacteraceae</taxon>
        <taxon>Campylobacter</taxon>
    </lineage>
</organism>
<sequence length="85" mass="9378">MAHKKGQGSTQNNRDSIGRRLGVKKFGGEFVRAGNIIIRQRGTATHPGNNVGIGRDHTIFALVDGFVKFERKDKDRKKVSVYPAA</sequence>
<feature type="chain" id="PRO_1000017441" description="Large ribosomal subunit protein bL27">
    <location>
        <begin position="1"/>
        <end position="85"/>
    </location>
</feature>
<reference key="1">
    <citation type="submission" date="2006-11" db="EMBL/GenBank/DDBJ databases">
        <title>Sequence of Campylobacter fetus subsp. fetus 82-40.</title>
        <authorList>
            <person name="Fouts D.E."/>
            <person name="Nelson K.E."/>
        </authorList>
    </citation>
    <scope>NUCLEOTIDE SEQUENCE [LARGE SCALE GENOMIC DNA]</scope>
    <source>
        <strain>82-40</strain>
    </source>
</reference>
<comment type="similarity">
    <text evidence="1">Belongs to the bacterial ribosomal protein bL27 family.</text>
</comment>
<accession>A0RR38</accession>
<proteinExistence type="inferred from homology"/>
<evidence type="ECO:0000255" key="1">
    <source>
        <dbReference type="HAMAP-Rule" id="MF_00539"/>
    </source>
</evidence>
<evidence type="ECO:0000305" key="2"/>
<keyword id="KW-0687">Ribonucleoprotein</keyword>
<keyword id="KW-0689">Ribosomal protein</keyword>
<name>RL27_CAMFF</name>